<gene>
    <name evidence="1" type="primary">thiI</name>
    <name type="ordered locus">VV1_0310</name>
</gene>
<proteinExistence type="inferred from homology"/>
<evidence type="ECO:0000255" key="1">
    <source>
        <dbReference type="HAMAP-Rule" id="MF_00021"/>
    </source>
</evidence>
<dbReference type="EC" id="2.8.1.4" evidence="1"/>
<dbReference type="EMBL" id="AE016795">
    <property type="protein sequence ID" value="AAO08840.1"/>
    <property type="molecule type" value="Genomic_DNA"/>
</dbReference>
<dbReference type="RefSeq" id="WP_011078415.1">
    <property type="nucleotide sequence ID" value="NC_004459.3"/>
</dbReference>
<dbReference type="SMR" id="Q8DFA8"/>
<dbReference type="KEGG" id="vvu:VV1_0310"/>
<dbReference type="HOGENOM" id="CLU_037952_4_1_6"/>
<dbReference type="UniPathway" id="UPA00060"/>
<dbReference type="Proteomes" id="UP000002275">
    <property type="component" value="Chromosome 1"/>
</dbReference>
<dbReference type="GO" id="GO:0005829">
    <property type="term" value="C:cytosol"/>
    <property type="evidence" value="ECO:0007669"/>
    <property type="project" value="TreeGrafter"/>
</dbReference>
<dbReference type="GO" id="GO:0005524">
    <property type="term" value="F:ATP binding"/>
    <property type="evidence" value="ECO:0007669"/>
    <property type="project" value="UniProtKB-UniRule"/>
</dbReference>
<dbReference type="GO" id="GO:0004810">
    <property type="term" value="F:CCA tRNA nucleotidyltransferase activity"/>
    <property type="evidence" value="ECO:0007669"/>
    <property type="project" value="InterPro"/>
</dbReference>
<dbReference type="GO" id="GO:0000049">
    <property type="term" value="F:tRNA binding"/>
    <property type="evidence" value="ECO:0007669"/>
    <property type="project" value="UniProtKB-UniRule"/>
</dbReference>
<dbReference type="GO" id="GO:0140741">
    <property type="term" value="F:tRNA-uracil-4 sulfurtransferase activity"/>
    <property type="evidence" value="ECO:0007669"/>
    <property type="project" value="UniProtKB-EC"/>
</dbReference>
<dbReference type="GO" id="GO:0009228">
    <property type="term" value="P:thiamine biosynthetic process"/>
    <property type="evidence" value="ECO:0007669"/>
    <property type="project" value="UniProtKB-KW"/>
</dbReference>
<dbReference type="GO" id="GO:0009229">
    <property type="term" value="P:thiamine diphosphate biosynthetic process"/>
    <property type="evidence" value="ECO:0007669"/>
    <property type="project" value="UniProtKB-UniRule"/>
</dbReference>
<dbReference type="GO" id="GO:0052837">
    <property type="term" value="P:thiazole biosynthetic process"/>
    <property type="evidence" value="ECO:0007669"/>
    <property type="project" value="InterPro"/>
</dbReference>
<dbReference type="GO" id="GO:0002937">
    <property type="term" value="P:tRNA 4-thiouridine biosynthesis"/>
    <property type="evidence" value="ECO:0007669"/>
    <property type="project" value="TreeGrafter"/>
</dbReference>
<dbReference type="CDD" id="cd01712">
    <property type="entry name" value="PPase_ThiI"/>
    <property type="match status" value="1"/>
</dbReference>
<dbReference type="CDD" id="cd00158">
    <property type="entry name" value="RHOD"/>
    <property type="match status" value="1"/>
</dbReference>
<dbReference type="CDD" id="cd11716">
    <property type="entry name" value="THUMP_ThiI"/>
    <property type="match status" value="1"/>
</dbReference>
<dbReference type="FunFam" id="3.40.250.10:FF:000003">
    <property type="entry name" value="tRNA sulfurtransferase"/>
    <property type="match status" value="1"/>
</dbReference>
<dbReference type="FunFam" id="3.40.50.620:FF:000029">
    <property type="entry name" value="tRNA sulfurtransferase"/>
    <property type="match status" value="1"/>
</dbReference>
<dbReference type="Gene3D" id="3.30.2130.30">
    <property type="match status" value="1"/>
</dbReference>
<dbReference type="Gene3D" id="3.40.50.620">
    <property type="entry name" value="HUPs"/>
    <property type="match status" value="1"/>
</dbReference>
<dbReference type="Gene3D" id="3.40.250.10">
    <property type="entry name" value="Rhodanese-like domain"/>
    <property type="match status" value="1"/>
</dbReference>
<dbReference type="HAMAP" id="MF_00021">
    <property type="entry name" value="ThiI"/>
    <property type="match status" value="1"/>
</dbReference>
<dbReference type="InterPro" id="IPR001763">
    <property type="entry name" value="Rhodanese-like_dom"/>
</dbReference>
<dbReference type="InterPro" id="IPR036873">
    <property type="entry name" value="Rhodanese-like_dom_sf"/>
</dbReference>
<dbReference type="InterPro" id="IPR014729">
    <property type="entry name" value="Rossmann-like_a/b/a_fold"/>
</dbReference>
<dbReference type="InterPro" id="IPR020536">
    <property type="entry name" value="ThiI_AANH"/>
</dbReference>
<dbReference type="InterPro" id="IPR054173">
    <property type="entry name" value="ThiI_fer"/>
</dbReference>
<dbReference type="InterPro" id="IPR049961">
    <property type="entry name" value="ThiI_N"/>
</dbReference>
<dbReference type="InterPro" id="IPR026340">
    <property type="entry name" value="THII_Thiazole_biosynth_dom"/>
</dbReference>
<dbReference type="InterPro" id="IPR004114">
    <property type="entry name" value="THUMP_dom"/>
</dbReference>
<dbReference type="InterPro" id="IPR049962">
    <property type="entry name" value="THUMP_ThiI"/>
</dbReference>
<dbReference type="InterPro" id="IPR003720">
    <property type="entry name" value="tRNA_STrfase"/>
</dbReference>
<dbReference type="InterPro" id="IPR050102">
    <property type="entry name" value="tRNA_sulfurtransferase_ThiI"/>
</dbReference>
<dbReference type="NCBIfam" id="TIGR04271">
    <property type="entry name" value="ThiI_C_thiazole"/>
    <property type="match status" value="1"/>
</dbReference>
<dbReference type="NCBIfam" id="TIGR00342">
    <property type="entry name" value="tRNA uracil 4-sulfurtransferase ThiI"/>
    <property type="match status" value="1"/>
</dbReference>
<dbReference type="PANTHER" id="PTHR43209">
    <property type="entry name" value="TRNA SULFURTRANSFERASE"/>
    <property type="match status" value="1"/>
</dbReference>
<dbReference type="PANTHER" id="PTHR43209:SF1">
    <property type="entry name" value="TRNA SULFURTRANSFERASE"/>
    <property type="match status" value="1"/>
</dbReference>
<dbReference type="Pfam" id="PF02568">
    <property type="entry name" value="ThiI"/>
    <property type="match status" value="1"/>
</dbReference>
<dbReference type="Pfam" id="PF22025">
    <property type="entry name" value="ThiI_fer"/>
    <property type="match status" value="1"/>
</dbReference>
<dbReference type="Pfam" id="PF02926">
    <property type="entry name" value="THUMP"/>
    <property type="match status" value="1"/>
</dbReference>
<dbReference type="SMART" id="SM00981">
    <property type="entry name" value="THUMP"/>
    <property type="match status" value="1"/>
</dbReference>
<dbReference type="SUPFAM" id="SSF52402">
    <property type="entry name" value="Adenine nucleotide alpha hydrolases-like"/>
    <property type="match status" value="1"/>
</dbReference>
<dbReference type="SUPFAM" id="SSF52821">
    <property type="entry name" value="Rhodanese/Cell cycle control phosphatase"/>
    <property type="match status" value="1"/>
</dbReference>
<dbReference type="SUPFAM" id="SSF143437">
    <property type="entry name" value="THUMP domain-like"/>
    <property type="match status" value="1"/>
</dbReference>
<dbReference type="PROSITE" id="PS50206">
    <property type="entry name" value="RHODANESE_3"/>
    <property type="match status" value="1"/>
</dbReference>
<dbReference type="PROSITE" id="PS51165">
    <property type="entry name" value="THUMP"/>
    <property type="match status" value="1"/>
</dbReference>
<sequence>MKFIVKPHPEIFVKSESVRKRFTKILESNIRIIIQNRTESVAVFNRRDHIEVSANSHQYYQQVLEILTTTPGIQQVLEVKQSGFKDLHDIYEQVLELSRERIENKTFVVRAKRRGKHDFTSIELERYVGGGLNQSVESASVKLHNPDITIKIEVVDDKLNQILAHHKGLGGFPLGTQEDLLSLISGGFDSGVSSYLHIKRGSKVHYCFFNLGGPAHEIGVKQVAHFLWNKYGSSAKVRFISVDFEPVVAEILEKVEDGQMGVVLKRMFMRAAGMVAEKFDIQALVTGEALGQVSSQTLTNLRHIDVVTDRLILRPLINWDKDEIIKVARDIGTEDFAKTMPEYCGVISKKPTVKAVKEKLEAEEANFNFDILEQVVRNARQMDIRDIAKESAQAAPEVEQVQAIEEHAVVLDIRSPDEEDDSPLEIDGVEVKHIPFYKLSTQFGDLDQSKTYLLYCARGVMSRLQALYLQEQGFNNVKVYRP</sequence>
<accession>Q8DFA8</accession>
<keyword id="KW-0067">ATP-binding</keyword>
<keyword id="KW-0963">Cytoplasm</keyword>
<keyword id="KW-1015">Disulfide bond</keyword>
<keyword id="KW-0547">Nucleotide-binding</keyword>
<keyword id="KW-0676">Redox-active center</keyword>
<keyword id="KW-0694">RNA-binding</keyword>
<keyword id="KW-0784">Thiamine biosynthesis</keyword>
<keyword id="KW-0808">Transferase</keyword>
<keyword id="KW-0820">tRNA-binding</keyword>
<protein>
    <recommendedName>
        <fullName evidence="1">tRNA sulfurtransferase</fullName>
        <ecNumber evidence="1">2.8.1.4</ecNumber>
    </recommendedName>
    <alternativeName>
        <fullName evidence="1">Sulfur carrier protein ThiS sulfurtransferase</fullName>
    </alternativeName>
    <alternativeName>
        <fullName evidence="1">Thiamine biosynthesis protein ThiI</fullName>
    </alternativeName>
    <alternativeName>
        <fullName evidence="1">tRNA 4-thiouridine synthase</fullName>
    </alternativeName>
</protein>
<feature type="chain" id="PRO_0000154887" description="tRNA sulfurtransferase">
    <location>
        <begin position="1"/>
        <end position="482"/>
    </location>
</feature>
<feature type="domain" description="THUMP" evidence="1">
    <location>
        <begin position="61"/>
        <end position="165"/>
    </location>
</feature>
<feature type="domain" description="Rhodanese" evidence="1">
    <location>
        <begin position="404"/>
        <end position="482"/>
    </location>
</feature>
<feature type="active site" description="Cysteine persulfide intermediate" evidence="1">
    <location>
        <position position="456"/>
    </location>
</feature>
<feature type="binding site" evidence="1">
    <location>
        <begin position="183"/>
        <end position="184"/>
    </location>
    <ligand>
        <name>ATP</name>
        <dbReference type="ChEBI" id="CHEBI:30616"/>
    </ligand>
</feature>
<feature type="binding site" evidence="1">
    <location>
        <position position="265"/>
    </location>
    <ligand>
        <name>ATP</name>
        <dbReference type="ChEBI" id="CHEBI:30616"/>
    </ligand>
</feature>
<feature type="binding site" evidence="1">
    <location>
        <position position="287"/>
    </location>
    <ligand>
        <name>ATP</name>
        <dbReference type="ChEBI" id="CHEBI:30616"/>
    </ligand>
</feature>
<feature type="binding site" evidence="1">
    <location>
        <position position="296"/>
    </location>
    <ligand>
        <name>ATP</name>
        <dbReference type="ChEBI" id="CHEBI:30616"/>
    </ligand>
</feature>
<feature type="disulfide bond" description="Redox-active" evidence="1">
    <location>
        <begin position="344"/>
        <end position="456"/>
    </location>
</feature>
<name>THII_VIBVU</name>
<organism>
    <name type="scientific">Vibrio vulnificus (strain CMCP6)</name>
    <dbReference type="NCBI Taxonomy" id="216895"/>
    <lineage>
        <taxon>Bacteria</taxon>
        <taxon>Pseudomonadati</taxon>
        <taxon>Pseudomonadota</taxon>
        <taxon>Gammaproteobacteria</taxon>
        <taxon>Vibrionales</taxon>
        <taxon>Vibrionaceae</taxon>
        <taxon>Vibrio</taxon>
    </lineage>
</organism>
<reference key="1">
    <citation type="submission" date="2002-12" db="EMBL/GenBank/DDBJ databases">
        <title>Complete genome sequence of Vibrio vulnificus CMCP6.</title>
        <authorList>
            <person name="Rhee J.H."/>
            <person name="Kim S.Y."/>
            <person name="Chung S.S."/>
            <person name="Kim J.J."/>
            <person name="Moon Y.H."/>
            <person name="Jeong H."/>
            <person name="Choy H.E."/>
        </authorList>
    </citation>
    <scope>NUCLEOTIDE SEQUENCE [LARGE SCALE GENOMIC DNA]</scope>
    <source>
        <strain>CMCP6</strain>
    </source>
</reference>
<comment type="function">
    <text evidence="1">Catalyzes the ATP-dependent transfer of a sulfur to tRNA to produce 4-thiouridine in position 8 of tRNAs, which functions as a near-UV photosensor. Also catalyzes the transfer of sulfur to the sulfur carrier protein ThiS, forming ThiS-thiocarboxylate. This is a step in the synthesis of thiazole, in the thiamine biosynthesis pathway. The sulfur is donated as persulfide by IscS.</text>
</comment>
<comment type="catalytic activity">
    <reaction evidence="1">
        <text>[ThiI sulfur-carrier protein]-S-sulfanyl-L-cysteine + a uridine in tRNA + 2 reduced [2Fe-2S]-[ferredoxin] + ATP + H(+) = [ThiI sulfur-carrier protein]-L-cysteine + a 4-thiouridine in tRNA + 2 oxidized [2Fe-2S]-[ferredoxin] + AMP + diphosphate</text>
        <dbReference type="Rhea" id="RHEA:24176"/>
        <dbReference type="Rhea" id="RHEA-COMP:10000"/>
        <dbReference type="Rhea" id="RHEA-COMP:10001"/>
        <dbReference type="Rhea" id="RHEA-COMP:13337"/>
        <dbReference type="Rhea" id="RHEA-COMP:13338"/>
        <dbReference type="Rhea" id="RHEA-COMP:13339"/>
        <dbReference type="Rhea" id="RHEA-COMP:13340"/>
        <dbReference type="ChEBI" id="CHEBI:15378"/>
        <dbReference type="ChEBI" id="CHEBI:29950"/>
        <dbReference type="ChEBI" id="CHEBI:30616"/>
        <dbReference type="ChEBI" id="CHEBI:33019"/>
        <dbReference type="ChEBI" id="CHEBI:33737"/>
        <dbReference type="ChEBI" id="CHEBI:33738"/>
        <dbReference type="ChEBI" id="CHEBI:61963"/>
        <dbReference type="ChEBI" id="CHEBI:65315"/>
        <dbReference type="ChEBI" id="CHEBI:136798"/>
        <dbReference type="ChEBI" id="CHEBI:456215"/>
        <dbReference type="EC" id="2.8.1.4"/>
    </reaction>
</comment>
<comment type="catalytic activity">
    <reaction evidence="1">
        <text>[ThiS sulfur-carrier protein]-C-terminal Gly-Gly-AMP + S-sulfanyl-L-cysteinyl-[cysteine desulfurase] + AH2 = [ThiS sulfur-carrier protein]-C-terminal-Gly-aminoethanethioate + L-cysteinyl-[cysteine desulfurase] + A + AMP + 2 H(+)</text>
        <dbReference type="Rhea" id="RHEA:43340"/>
        <dbReference type="Rhea" id="RHEA-COMP:12157"/>
        <dbReference type="Rhea" id="RHEA-COMP:12158"/>
        <dbReference type="Rhea" id="RHEA-COMP:12910"/>
        <dbReference type="Rhea" id="RHEA-COMP:19908"/>
        <dbReference type="ChEBI" id="CHEBI:13193"/>
        <dbReference type="ChEBI" id="CHEBI:15378"/>
        <dbReference type="ChEBI" id="CHEBI:17499"/>
        <dbReference type="ChEBI" id="CHEBI:29950"/>
        <dbReference type="ChEBI" id="CHEBI:61963"/>
        <dbReference type="ChEBI" id="CHEBI:90618"/>
        <dbReference type="ChEBI" id="CHEBI:232372"/>
        <dbReference type="ChEBI" id="CHEBI:456215"/>
    </reaction>
</comment>
<comment type="pathway">
    <text evidence="1">Cofactor biosynthesis; thiamine diphosphate biosynthesis.</text>
</comment>
<comment type="subcellular location">
    <subcellularLocation>
        <location evidence="1">Cytoplasm</location>
    </subcellularLocation>
</comment>
<comment type="similarity">
    <text evidence="1">Belongs to the ThiI family.</text>
</comment>